<reference key="1">
    <citation type="journal article" date="2002" name="Am. J. Hum. Genet.">
        <title>A cascade of complex subtelomeric duplications during the evolution of the hominoid and Old World monkey genomes.</title>
        <authorList>
            <person name="van Geel M."/>
            <person name="Eichler E.E."/>
            <person name="Beck A.F."/>
            <person name="Shan Z."/>
            <person name="Haaf T."/>
            <person name="van der Maarel S.M."/>
            <person name="Frants R.R."/>
            <person name="de Jong P.J."/>
        </authorList>
    </citation>
    <scope>NUCLEOTIDE SEQUENCE [GENOMIC DNA]</scope>
</reference>
<reference key="2">
    <citation type="submission" date="2004-07" db="EMBL/GenBank/DDBJ databases">
        <title>Full-length cDNA libraries and normalization.</title>
        <authorList>
            <person name="Li W.B."/>
            <person name="Gruber C."/>
            <person name="Jessee J."/>
            <person name="Polayes D."/>
        </authorList>
    </citation>
    <scope>NUCLEOTIDE SEQUENCE [LARGE SCALE MRNA]</scope>
    <source>
        <tissue>Fetal brain</tissue>
    </source>
</reference>
<reference key="3">
    <citation type="journal article" date="2004" name="Nature">
        <title>The DNA sequence and comparative analysis of human chromosome 10.</title>
        <authorList>
            <person name="Deloukas P."/>
            <person name="Earthrowl M.E."/>
            <person name="Grafham D.V."/>
            <person name="Rubenfield M."/>
            <person name="French L."/>
            <person name="Steward C.A."/>
            <person name="Sims S.K."/>
            <person name="Jones M.C."/>
            <person name="Searle S."/>
            <person name="Scott C."/>
            <person name="Howe K."/>
            <person name="Hunt S.E."/>
            <person name="Andrews T.D."/>
            <person name="Gilbert J.G.R."/>
            <person name="Swarbreck D."/>
            <person name="Ashurst J.L."/>
            <person name="Taylor A."/>
            <person name="Battles J."/>
            <person name="Bird C.P."/>
            <person name="Ainscough R."/>
            <person name="Almeida J.P."/>
            <person name="Ashwell R.I.S."/>
            <person name="Ambrose K.D."/>
            <person name="Babbage A.K."/>
            <person name="Bagguley C.L."/>
            <person name="Bailey J."/>
            <person name="Banerjee R."/>
            <person name="Bates K."/>
            <person name="Beasley H."/>
            <person name="Bray-Allen S."/>
            <person name="Brown A.J."/>
            <person name="Brown J.Y."/>
            <person name="Burford D.C."/>
            <person name="Burrill W."/>
            <person name="Burton J."/>
            <person name="Cahill P."/>
            <person name="Camire D."/>
            <person name="Carter N.P."/>
            <person name="Chapman J.C."/>
            <person name="Clark S.Y."/>
            <person name="Clarke G."/>
            <person name="Clee C.M."/>
            <person name="Clegg S."/>
            <person name="Corby N."/>
            <person name="Coulson A."/>
            <person name="Dhami P."/>
            <person name="Dutta I."/>
            <person name="Dunn M."/>
            <person name="Faulkner L."/>
            <person name="Frankish A."/>
            <person name="Frankland J.A."/>
            <person name="Garner P."/>
            <person name="Garnett J."/>
            <person name="Gribble S."/>
            <person name="Griffiths C."/>
            <person name="Grocock R."/>
            <person name="Gustafson E."/>
            <person name="Hammond S."/>
            <person name="Harley J.L."/>
            <person name="Hart E."/>
            <person name="Heath P.D."/>
            <person name="Ho T.P."/>
            <person name="Hopkins B."/>
            <person name="Horne J."/>
            <person name="Howden P.J."/>
            <person name="Huckle E."/>
            <person name="Hynds C."/>
            <person name="Johnson C."/>
            <person name="Johnson D."/>
            <person name="Kana A."/>
            <person name="Kay M."/>
            <person name="Kimberley A.M."/>
            <person name="Kershaw J.K."/>
            <person name="Kokkinaki M."/>
            <person name="Laird G.K."/>
            <person name="Lawlor S."/>
            <person name="Lee H.M."/>
            <person name="Leongamornlert D.A."/>
            <person name="Laird G."/>
            <person name="Lloyd C."/>
            <person name="Lloyd D.M."/>
            <person name="Loveland J."/>
            <person name="Lovell J."/>
            <person name="McLaren S."/>
            <person name="McLay K.E."/>
            <person name="McMurray A."/>
            <person name="Mashreghi-Mohammadi M."/>
            <person name="Matthews L."/>
            <person name="Milne S."/>
            <person name="Nickerson T."/>
            <person name="Nguyen M."/>
            <person name="Overton-Larty E."/>
            <person name="Palmer S.A."/>
            <person name="Pearce A.V."/>
            <person name="Peck A.I."/>
            <person name="Pelan S."/>
            <person name="Phillimore B."/>
            <person name="Porter K."/>
            <person name="Rice C.M."/>
            <person name="Rogosin A."/>
            <person name="Ross M.T."/>
            <person name="Sarafidou T."/>
            <person name="Sehra H.K."/>
            <person name="Shownkeen R."/>
            <person name="Skuce C.D."/>
            <person name="Smith M."/>
            <person name="Standring L."/>
            <person name="Sycamore N."/>
            <person name="Tester J."/>
            <person name="Thorpe A."/>
            <person name="Torcasso W."/>
            <person name="Tracey A."/>
            <person name="Tromans A."/>
            <person name="Tsolas J."/>
            <person name="Wall M."/>
            <person name="Walsh J."/>
            <person name="Wang H."/>
            <person name="Weinstock K."/>
            <person name="West A.P."/>
            <person name="Willey D.L."/>
            <person name="Whitehead S.L."/>
            <person name="Wilming L."/>
            <person name="Wray P.W."/>
            <person name="Young L."/>
            <person name="Chen Y."/>
            <person name="Lovering R.C."/>
            <person name="Moschonas N.K."/>
            <person name="Siebert R."/>
            <person name="Fechtel K."/>
            <person name="Bentley D."/>
            <person name="Durbin R.M."/>
            <person name="Hubbard T."/>
            <person name="Doucette-Stamm L."/>
            <person name="Beck S."/>
            <person name="Smith D.R."/>
            <person name="Rogers J."/>
        </authorList>
    </citation>
    <scope>NUCLEOTIDE SEQUENCE [LARGE SCALE GENOMIC DNA]</scope>
</reference>
<reference key="4">
    <citation type="submission" date="2005-09" db="EMBL/GenBank/DDBJ databases">
        <authorList>
            <person name="Mural R.J."/>
            <person name="Istrail S."/>
            <person name="Sutton G.G."/>
            <person name="Florea L."/>
            <person name="Halpern A.L."/>
            <person name="Mobarry C.M."/>
            <person name="Lippert R."/>
            <person name="Walenz B."/>
            <person name="Shatkay H."/>
            <person name="Dew I."/>
            <person name="Miller J.R."/>
            <person name="Flanigan M.J."/>
            <person name="Edwards N.J."/>
            <person name="Bolanos R."/>
            <person name="Fasulo D."/>
            <person name="Halldorsson B.V."/>
            <person name="Hannenhalli S."/>
            <person name="Turner R."/>
            <person name="Yooseph S."/>
            <person name="Lu F."/>
            <person name="Nusskern D.R."/>
            <person name="Shue B.C."/>
            <person name="Zheng X.H."/>
            <person name="Zhong F."/>
            <person name="Delcher A.L."/>
            <person name="Huson D.H."/>
            <person name="Kravitz S.A."/>
            <person name="Mouchard L."/>
            <person name="Reinert K."/>
            <person name="Remington K.A."/>
            <person name="Clark A.G."/>
            <person name="Waterman M.S."/>
            <person name="Eichler E.E."/>
            <person name="Adams M.D."/>
            <person name="Hunkapiller M.W."/>
            <person name="Myers E.W."/>
            <person name="Venter J.C."/>
        </authorList>
    </citation>
    <scope>NUCLEOTIDE SEQUENCE [LARGE SCALE GENOMIC DNA]</scope>
</reference>
<reference key="5">
    <citation type="journal article" date="2004" name="Genome Res.">
        <title>The status, quality, and expansion of the NIH full-length cDNA project: the Mammalian Gene Collection (MGC).</title>
        <authorList>
            <consortium name="The MGC Project Team"/>
        </authorList>
    </citation>
    <scope>NUCLEOTIDE SEQUENCE [LARGE SCALE MRNA] OF 4-444</scope>
</reference>
<reference key="6">
    <citation type="journal article" date="2006" name="Mol. Biol. Cell">
        <title>Microtubule regulation in mitosis: tubulin phosphorylation by the cyclin-dependent kinase Cdk1.</title>
        <authorList>
            <person name="Fourest-Lieuvin A."/>
            <person name="Peris L."/>
            <person name="Gache V."/>
            <person name="Garcia-Saez I."/>
            <person name="Juillan-Binard C."/>
            <person name="Lantez V."/>
            <person name="Job D."/>
        </authorList>
    </citation>
    <scope>PHOSPHORYLATION AT SER-172</scope>
</reference>
<reference key="7">
    <citation type="journal article" date="2009" name="Cell">
        <title>Evolutionary divergence of enzymatic mechanisms for posttranslational polyglycylation.</title>
        <authorList>
            <person name="Rogowski K."/>
            <person name="Juge F."/>
            <person name="van Dijk J."/>
            <person name="Wloga D."/>
            <person name="Strub J.-M."/>
            <person name="Levilliers N."/>
            <person name="Thomas D."/>
            <person name="Bre M.-H."/>
            <person name="Van Dorsselaer A."/>
            <person name="Gaertig J."/>
            <person name="Janke C."/>
        </authorList>
    </citation>
    <scope>GLYCYLATION</scope>
</reference>
<reference key="8">
    <citation type="journal article" date="2011" name="BMC Syst. Biol.">
        <title>Initial characterization of the human central proteome.</title>
        <authorList>
            <person name="Burkard T.R."/>
            <person name="Planyavsky M."/>
            <person name="Kaupe I."/>
            <person name="Breitwieser F.P."/>
            <person name="Buerckstuemmer T."/>
            <person name="Bennett K.L."/>
            <person name="Superti-Furga G."/>
            <person name="Colinge J."/>
        </authorList>
    </citation>
    <scope>IDENTIFICATION BY MASS SPECTROMETRY [LARGE SCALE ANALYSIS]</scope>
</reference>
<reference key="9">
    <citation type="journal article" date="2016" name="Cell">
        <title>Graded control of microtubule severing by tubulin glutamylation.</title>
        <authorList>
            <person name="Valenstein M.L."/>
            <person name="Roll-Mecak A."/>
        </authorList>
    </citation>
    <scope>GLUTAMYLATION</scope>
</reference>
<reference key="10">
    <citation type="journal article" date="2016" name="J. Med. Genet.">
        <title>Mutations in TUBB8 cause a multiplicity of phenotypes in human oocytes and early embryos.</title>
        <authorList>
            <person name="Feng R."/>
            <person name="Yan Z."/>
            <person name="Li B."/>
            <person name="Yu M."/>
            <person name="Sang Q."/>
            <person name="Tian G."/>
            <person name="Xu Y."/>
            <person name="Chen B."/>
            <person name="Qu R."/>
            <person name="Sun Z."/>
            <person name="Sun X."/>
            <person name="Jin L."/>
            <person name="He L."/>
            <person name="Kuang Y."/>
            <person name="Cowan N.J."/>
            <person name="Wang L."/>
        </authorList>
    </citation>
    <scope>INVOLVEMENT IN OZEMA2</scope>
    <scope>VARIANTS OZEMA2 27-GLU--ALA-33 DEL; LEU-176; VAL-210; MET-238; MET-255; TRP-262; PRO-285 AND SER-348</scope>
    <scope>CHARACTERIZATION OF VARIANTS OZEMA2 27-GLU--ALA-33 DEL; LEU-176; VAL-210; MET-238; MET-255; TRP-262; PRO-285 AND SER-348</scope>
</reference>
<reference key="11">
    <citation type="journal article" date="2016" name="N. Engl. J. Med.">
        <title>Mutations in TUBB8 and human oocyte meiotic arrest.</title>
        <authorList>
            <person name="Feng R."/>
            <person name="Sang Q."/>
            <person name="Kuang Y."/>
            <person name="Sun X."/>
            <person name="Yan Z."/>
            <person name="Zhang S."/>
            <person name="Shi J."/>
            <person name="Tian G."/>
            <person name="Luchniak A."/>
            <person name="Fukuda Y."/>
            <person name="Li B."/>
            <person name="Yu M."/>
            <person name="Chen J."/>
            <person name="Xu Y."/>
            <person name="Guo L."/>
            <person name="Qu R."/>
            <person name="Wang X."/>
            <person name="Sun Z."/>
            <person name="Liu M."/>
            <person name="Shi H."/>
            <person name="Wang H."/>
            <person name="Feng Y."/>
            <person name="Shao R."/>
            <person name="Chai R."/>
            <person name="Li Q."/>
            <person name="Xing Q."/>
            <person name="Zhang R."/>
            <person name="Nogales E."/>
            <person name="Jin L."/>
            <person name="He L."/>
            <person name="Gupta M.L. Jr."/>
            <person name="Cowan N.J."/>
            <person name="Wang L."/>
        </authorList>
    </citation>
    <scope>FUNCTION</scope>
    <scope>TISSUE SPECIFICITY</scope>
    <scope>SUBCELLULAR LOCATION</scope>
    <scope>INVOLVEMENT IN OZEMA2</scope>
    <scope>VARIANTS OZEMA2 LYS-2; LEU-176; ALA-229; GLN-262; ILE-300; THR-363 AND ASN-417</scope>
    <scope>CHARACTERIZATION OF VARIANTS OZEMA2 LYS-2; LEU-176; ALA-229; GLN-262; ILE-300; THR-363 AND ASN-417</scope>
</reference>
<reference key="12">
    <citation type="journal article" date="2020" name="J. Ovarian Res.">
        <title>Rare homozygous mutation in TUBB8 associated with oocyte maturation defect-2 in a consanguineous mating family.</title>
        <authorList>
            <person name="Xing Q."/>
            <person name="Wang R."/>
            <person name="Chen B."/>
            <person name="Li L."/>
            <person name="Pan H."/>
            <person name="Li T."/>
            <person name="Ma X."/>
            <person name="Cao Y."/>
            <person name="Wang B."/>
        </authorList>
    </citation>
    <scope>VARIANT OZEMA2 VAL-54</scope>
</reference>
<reference key="13">
    <citation type="journal article" date="2021" name="Reprod. BioMed. Online">
        <title>Two mutations in TUBB8 cause developmental arrest in human oocytes and early embryos.</title>
        <authorList>
            <person name="Cao T."/>
            <person name="Guo J."/>
            <person name="Xu Y."/>
            <person name="Lin X."/>
            <person name="Deng W."/>
            <person name="Cheng L."/>
            <person name="Zhao H."/>
            <person name="Jiang S."/>
            <person name="Gao M."/>
            <person name="Huang J."/>
            <person name="Xu Y."/>
        </authorList>
    </citation>
    <scope>VARIANTS OZEMA2 VAL-54 AND HIS-320</scope>
    <scope>CHARACTERIZATION OF VARIANTS OZEMA2 VAL-54 AND HIS-320</scope>
    <scope>FUNCTION</scope>
</reference>
<evidence type="ECO:0000250" key="1">
    <source>
        <dbReference type="UniProtKB" id="P07437"/>
    </source>
</evidence>
<evidence type="ECO:0000250" key="2">
    <source>
        <dbReference type="UniProtKB" id="P68363"/>
    </source>
</evidence>
<evidence type="ECO:0000250" key="3">
    <source>
        <dbReference type="UniProtKB" id="P99024"/>
    </source>
</evidence>
<evidence type="ECO:0000250" key="4">
    <source>
        <dbReference type="UniProtKB" id="Q13509"/>
    </source>
</evidence>
<evidence type="ECO:0000250" key="5">
    <source>
        <dbReference type="UniProtKB" id="Q2T9S0"/>
    </source>
</evidence>
<evidence type="ECO:0000256" key="6">
    <source>
        <dbReference type="SAM" id="MobiDB-lite"/>
    </source>
</evidence>
<evidence type="ECO:0000269" key="7">
    <source>
    </source>
</evidence>
<evidence type="ECO:0000269" key="8">
    <source>
    </source>
</evidence>
<evidence type="ECO:0000269" key="9">
    <source>
    </source>
</evidence>
<evidence type="ECO:0000269" key="10">
    <source>
    </source>
</evidence>
<evidence type="ECO:0000269" key="11">
    <source>
    </source>
</evidence>
<evidence type="ECO:0000269" key="12">
    <source>
    </source>
</evidence>
<evidence type="ECO:0000305" key="13"/>
<evidence type="ECO:0000305" key="14">
    <source>
    </source>
</evidence>
<evidence type="ECO:0000312" key="15">
    <source>
        <dbReference type="HGNC" id="HGNC:20773"/>
    </source>
</evidence>
<feature type="chain" id="PRO_0000320631" description="Tubulin beta-8 chain">
    <location>
        <begin position="1"/>
        <end position="444"/>
    </location>
</feature>
<feature type="region of interest" description="Disordered" evidence="6">
    <location>
        <begin position="423"/>
        <end position="444"/>
    </location>
</feature>
<feature type="short sequence motif" description="MREI motif" evidence="1">
    <location>
        <begin position="1"/>
        <end position="4"/>
    </location>
</feature>
<feature type="compositionally biased region" description="Acidic residues" evidence="6">
    <location>
        <begin position="429"/>
        <end position="444"/>
    </location>
</feature>
<feature type="binding site" evidence="4">
    <location>
        <position position="11"/>
    </location>
    <ligand>
        <name>GTP</name>
        <dbReference type="ChEBI" id="CHEBI:37565"/>
    </ligand>
</feature>
<feature type="binding site" evidence="2">
    <location>
        <position position="69"/>
    </location>
    <ligand>
        <name>GTP</name>
        <dbReference type="ChEBI" id="CHEBI:37565"/>
    </ligand>
</feature>
<feature type="binding site" evidence="2">
    <location>
        <position position="69"/>
    </location>
    <ligand>
        <name>Mg(2+)</name>
        <dbReference type="ChEBI" id="CHEBI:18420"/>
    </ligand>
</feature>
<feature type="binding site" evidence="4">
    <location>
        <position position="138"/>
    </location>
    <ligand>
        <name>GTP</name>
        <dbReference type="ChEBI" id="CHEBI:37565"/>
    </ligand>
</feature>
<feature type="binding site" evidence="4">
    <location>
        <position position="142"/>
    </location>
    <ligand>
        <name>GTP</name>
        <dbReference type="ChEBI" id="CHEBI:37565"/>
    </ligand>
</feature>
<feature type="binding site" evidence="4">
    <location>
        <position position="143"/>
    </location>
    <ligand>
        <name>GTP</name>
        <dbReference type="ChEBI" id="CHEBI:37565"/>
    </ligand>
</feature>
<feature type="binding site" evidence="4">
    <location>
        <position position="144"/>
    </location>
    <ligand>
        <name>GTP</name>
        <dbReference type="ChEBI" id="CHEBI:37565"/>
    </ligand>
</feature>
<feature type="binding site" evidence="4">
    <location>
        <position position="204"/>
    </location>
    <ligand>
        <name>GTP</name>
        <dbReference type="ChEBI" id="CHEBI:37565"/>
    </ligand>
</feature>
<feature type="binding site" evidence="4">
    <location>
        <position position="226"/>
    </location>
    <ligand>
        <name>GTP</name>
        <dbReference type="ChEBI" id="CHEBI:37565"/>
    </ligand>
</feature>
<feature type="modified residue" description="Phosphoserine; by CDK1" evidence="7">
    <location>
        <position position="172"/>
    </location>
</feature>
<feature type="modified residue" description="5-glutamyl polyglutamate" evidence="5">
    <location>
        <position position="436"/>
    </location>
</feature>
<feature type="sequence variant" id="VAR_076898" description="In OZEMA2; loss of function in oocyte maturation; decreased alpha/beta-tubulin heterodimer assembly; dbSNP:rs869025273." evidence="8">
    <original>R</original>
    <variation>K</variation>
    <location>
        <position position="2"/>
    </location>
</feature>
<feature type="sequence variant" id="VAR_076899" description="In OZEMA2; loss of alpha/beta-tubulin heterodimer assembly; loss of function in meiotic spindle assembly." evidence="10">
    <location>
        <begin position="27"/>
        <end position="33"/>
    </location>
</feature>
<feature type="sequence variant" id="VAR_087566" description="In OZEMA2; loss of function in meiotic spindle assembly and oocyte maturation; when expressed in mouse oocytes it leads to abnormal spindle structure and maturation arrest; dbSNP:rs375210323." evidence="11 12">
    <original>A</original>
    <variation>V</variation>
    <location>
        <position position="54"/>
    </location>
</feature>
<feature type="sequence variant" id="VAR_076900" description="In OZEMA2; loss of function in oocyte maturation; loss of function in meiotic spindle assembly; decreased alpha/beta-tubulin heterodimer assembly; dbSNP:rs869025609." evidence="8 10">
    <original>S</original>
    <variation>L</variation>
    <location>
        <position position="176"/>
    </location>
</feature>
<feature type="sequence variant" id="VAR_076901" description="In OZEMA2; decreased alpha/beta-tubulin heterodimer assembly; loss of function in meiotic spindle assembly; dbSNP:rs781853492." evidence="10">
    <original>I</original>
    <variation>V</variation>
    <location>
        <position position="210"/>
    </location>
</feature>
<feature type="sequence variant" id="VAR_076902" description="In OZEMA2; loss of function in oocyte maturation; decreased alpha/beta-tubulin heterodimer assembly; dbSNP:rs869025271." evidence="8">
    <original>V</original>
    <variation>A</variation>
    <location>
        <position position="229"/>
    </location>
</feature>
<feature type="sequence variant" id="VAR_076903" description="In OZEMA2; decreased alpha/beta-tubulin heterodimer assembly; loss of function in meiotic spindle assembly; dbSNP:rs1057520306." evidence="10">
    <original>T</original>
    <variation>M</variation>
    <location>
        <position position="238"/>
    </location>
</feature>
<feature type="sequence variant" id="VAR_076904" description="In OZEMA2; loss of function in meiotic spindle assembly; dbSNP:rs782269374." evidence="10">
    <original>V</original>
    <variation>M</variation>
    <location>
        <position position="255"/>
    </location>
</feature>
<feature type="sequence variant" id="VAR_076905" description="In OZEMA2; loss of function in oocyte maturation; decreased alpha/beta-tubulin heterodimer assembly; dbSNP:rs869025610." evidence="8">
    <original>R</original>
    <variation>Q</variation>
    <location>
        <position position="262"/>
    </location>
</feature>
<feature type="sequence variant" id="VAR_076906" description="In OZEMA2; decreased alpha/beta-tubulin heterodimer assembly; does not affect function in meiotic spindle assembly; dbSNP:rs782486119." evidence="10">
    <original>R</original>
    <variation>W</variation>
    <location>
        <position position="262"/>
    </location>
</feature>
<feature type="sequence variant" id="VAR_076907" description="In OZEMA2; loss of function in meiotic spindle assembly." evidence="10">
    <original>T</original>
    <variation>P</variation>
    <location>
        <position position="285"/>
    </location>
</feature>
<feature type="sequence variant" id="VAR_076908" description="In OZEMA2; loss of function in oocyte maturation; decreased alpha/beta-tubulin heterodimer assembly; dbSNP:rs869025612." evidence="8">
    <original>M</original>
    <variation>I</variation>
    <location>
        <position position="300"/>
    </location>
</feature>
<feature type="sequence variant" id="VAR_087567" description="In OZEMA2; loss of function in meiotic spindle assembly and oocyte maturation; when expressed in mouse oocytes it leads to abnormal spindle structure and maturation arrest; dbSNP:rs1465781298." evidence="12">
    <original>R</original>
    <variation>H</variation>
    <location>
        <position position="320"/>
    </location>
</feature>
<feature type="sequence variant" id="VAR_039240" description="In dbSNP:rs4880608.">
    <original>L</original>
    <variation>F</variation>
    <location>
        <position position="345"/>
    </location>
</feature>
<feature type="sequence variant" id="VAR_076909" description="In OZEMA2; loss of function in meiotic spindle assembly; dbSNP:rs1270068662." evidence="10">
    <original>N</original>
    <variation>S</variation>
    <location>
        <position position="348"/>
    </location>
</feature>
<feature type="sequence variant" id="VAR_076910" description="In OZEMA2; loss of function in oocyte maturation; decreased alpha/beta-tubulin heterodimer assembly; dbSNP:rs869025611." evidence="8">
    <original>M</original>
    <variation>T</variation>
    <location>
        <position position="363"/>
    </location>
</feature>
<feature type="sequence variant" id="VAR_076911" description="In OZEMA2; loss of function in oocyte maturation; loss of function in meiotic spindle assembly; decreased alpha/beta-tubulin heterodimer assembly; dbSNP:rs869025272." evidence="8">
    <original>D</original>
    <variation>N</variation>
    <location>
        <position position="417"/>
    </location>
</feature>
<accession>Q3ZCM7</accession>
<accession>Q5SQX9</accession>
<accession>Q8WZ78</accession>
<protein>
    <recommendedName>
        <fullName evidence="13">Tubulin beta-8 chain</fullName>
    </recommendedName>
    <alternativeName>
        <fullName evidence="15">Tubulin beta 8 class VIII</fullName>
    </alternativeName>
</protein>
<name>TBB8_HUMAN</name>
<sequence>MREIVLTQIGQCGNQIGAKFWEVISDEHAIDSAGTYHGDSHLQLERINVYYNEASGGRYVPRAVLVDLEPGTMDSVRSGPFGQVFRPDNFIFGQCGAGNNWAKGHYTEGAELMESVMDVVRKEAESCDCLQGFQLTHSLGGGTGSGMGTLLLSKIREEYPDRIINTFSILPSPKVSDTVVEPYNATLSVHQLIENADETFCIDNEALYDICSKTLKLPTPTYGDLNHLVSATMSGVTTCLRFPGQLNADLRKLAVNMVPFPRLHFFMPGFAPLTSRGSQQYRALTVAELTQQMFDAKNMMAACDPRHGRYLTAAAIFRGRMPMREVDEQMFNIQDKNSSYFADWLPNNVKTAVCDIPPRGLKMSATFIGNNTAIQELFKRVSEQFTAMFRRKAFLHWYTGEGMDEMEFTEAESNMNDLVSEYQQYQDATAEEEEDEEYAEEEVA</sequence>
<gene>
    <name evidence="15" type="primary">TUBB8</name>
</gene>
<proteinExistence type="evidence at protein level"/>
<dbReference type="EMBL" id="AF355127">
    <property type="protein sequence ID" value="AAL32434.1"/>
    <property type="molecule type" value="Genomic_DNA"/>
</dbReference>
<dbReference type="EMBL" id="CR590375">
    <property type="status" value="NOT_ANNOTATED_CDS"/>
    <property type="molecule type" value="mRNA"/>
</dbReference>
<dbReference type="EMBL" id="AL713922">
    <property type="status" value="NOT_ANNOTATED_CDS"/>
    <property type="molecule type" value="Genomic_DNA"/>
</dbReference>
<dbReference type="EMBL" id="CH471072">
    <property type="protein sequence ID" value="EAW86545.1"/>
    <property type="molecule type" value="Genomic_DNA"/>
</dbReference>
<dbReference type="EMBL" id="BC101270">
    <property type="protein sequence ID" value="AAI01271.1"/>
    <property type="molecule type" value="mRNA"/>
</dbReference>
<dbReference type="EMBL" id="BC101271">
    <property type="protein sequence ID" value="AAI01272.1"/>
    <property type="molecule type" value="mRNA"/>
</dbReference>
<dbReference type="CCDS" id="CCDS7051.1"/>
<dbReference type="RefSeq" id="NP_817124.1">
    <property type="nucleotide sequence ID" value="NM_177987.3"/>
</dbReference>
<dbReference type="SMR" id="Q3ZCM7"/>
<dbReference type="BioGRID" id="131462">
    <property type="interactions" value="590"/>
</dbReference>
<dbReference type="CORUM" id="Q3ZCM7"/>
<dbReference type="FunCoup" id="Q3ZCM7">
    <property type="interactions" value="1424"/>
</dbReference>
<dbReference type="IntAct" id="Q3ZCM7">
    <property type="interactions" value="332"/>
</dbReference>
<dbReference type="MINT" id="Q3ZCM7"/>
<dbReference type="STRING" id="9606.ENSP00000456206"/>
<dbReference type="ChEMBL" id="CHEMBL2095182"/>
<dbReference type="DrugCentral" id="Q3ZCM7"/>
<dbReference type="GlyGen" id="Q3ZCM7">
    <property type="glycosylation" value="1 site, 1 O-linked glycan (1 site)"/>
</dbReference>
<dbReference type="iPTMnet" id="Q3ZCM7"/>
<dbReference type="MetOSite" id="Q3ZCM7"/>
<dbReference type="PhosphoSitePlus" id="Q3ZCM7"/>
<dbReference type="SwissPalm" id="Q3ZCM7"/>
<dbReference type="BioMuta" id="TUBB8"/>
<dbReference type="DMDM" id="182705285"/>
<dbReference type="jPOST" id="Q3ZCM7"/>
<dbReference type="MassIVE" id="Q3ZCM7"/>
<dbReference type="PaxDb" id="9606-ENSP00000456206"/>
<dbReference type="PeptideAtlas" id="Q3ZCM7"/>
<dbReference type="ProteomicsDB" id="61904"/>
<dbReference type="Pumba" id="Q3ZCM7"/>
<dbReference type="Antibodypedia" id="59334">
    <property type="antibodies" value="100 antibodies from 22 providers"/>
</dbReference>
<dbReference type="DNASU" id="347688"/>
<dbReference type="Ensembl" id="ENST00000568584.6">
    <property type="protein sequence ID" value="ENSP00000456206.2"/>
    <property type="gene ID" value="ENSG00000261456.6"/>
</dbReference>
<dbReference type="GeneID" id="347688"/>
<dbReference type="KEGG" id="hsa:347688"/>
<dbReference type="MANE-Select" id="ENST00000568584.6">
    <property type="protein sequence ID" value="ENSP00000456206.2"/>
    <property type="RefSeq nucleotide sequence ID" value="NM_177987.3"/>
    <property type="RefSeq protein sequence ID" value="NP_817124.1"/>
</dbReference>
<dbReference type="UCSC" id="uc001ifi.3">
    <property type="organism name" value="human"/>
</dbReference>
<dbReference type="AGR" id="HGNC:20773"/>
<dbReference type="CTD" id="347688"/>
<dbReference type="DisGeNET" id="347688"/>
<dbReference type="GeneCards" id="TUBB8"/>
<dbReference type="HGNC" id="HGNC:20773">
    <property type="gene designation" value="TUBB8"/>
</dbReference>
<dbReference type="HPA" id="ENSG00000261456">
    <property type="expression patterns" value="Tissue enhanced (ovary, testis)"/>
</dbReference>
<dbReference type="MalaCards" id="TUBB8"/>
<dbReference type="MIM" id="616768">
    <property type="type" value="gene"/>
</dbReference>
<dbReference type="MIM" id="616780">
    <property type="type" value="phenotype"/>
</dbReference>
<dbReference type="neXtProt" id="NX_Q3ZCM7"/>
<dbReference type="OpenTargets" id="ENSG00000261456"/>
<dbReference type="Orphanet" id="488191">
    <property type="disease" value="Female infertility due to oocyte meiotic arrest"/>
</dbReference>
<dbReference type="VEuPathDB" id="HostDB:ENSG00000261456"/>
<dbReference type="eggNOG" id="KOG1375">
    <property type="taxonomic scope" value="Eukaryota"/>
</dbReference>
<dbReference type="GeneTree" id="ENSGT00940000161436"/>
<dbReference type="InParanoid" id="Q3ZCM7"/>
<dbReference type="OMA" id="SFIFGQC"/>
<dbReference type="OrthoDB" id="1662883at2759"/>
<dbReference type="PAN-GO" id="Q3ZCM7">
    <property type="GO annotations" value="6 GO annotations based on evolutionary models"/>
</dbReference>
<dbReference type="PhylomeDB" id="Q3ZCM7"/>
<dbReference type="TreeFam" id="TF300298"/>
<dbReference type="PathwayCommons" id="Q3ZCM7"/>
<dbReference type="Reactome" id="R-HSA-1445148">
    <property type="pathway name" value="Translocation of SLC2A4 (GLUT4) to the plasma membrane"/>
</dbReference>
<dbReference type="Reactome" id="R-HSA-190840">
    <property type="pathway name" value="Microtubule-dependent trafficking of connexons from Golgi to the plasma membrane"/>
</dbReference>
<dbReference type="Reactome" id="R-HSA-190861">
    <property type="pathway name" value="Gap junction assembly"/>
</dbReference>
<dbReference type="Reactome" id="R-HSA-2132295">
    <property type="pathway name" value="MHC class II antigen presentation"/>
</dbReference>
<dbReference type="Reactome" id="R-HSA-2467813">
    <property type="pathway name" value="Separation of Sister Chromatids"/>
</dbReference>
<dbReference type="Reactome" id="R-HSA-2500257">
    <property type="pathway name" value="Resolution of Sister Chromatid Cohesion"/>
</dbReference>
<dbReference type="Reactome" id="R-HSA-3371497">
    <property type="pathway name" value="HSP90 chaperone cycle for steroid hormone receptors (SHR) in the presence of ligand"/>
</dbReference>
<dbReference type="Reactome" id="R-HSA-380320">
    <property type="pathway name" value="Recruitment of NuMA to mitotic centrosomes"/>
</dbReference>
<dbReference type="Reactome" id="R-HSA-437239">
    <property type="pathway name" value="Recycling pathway of L1"/>
</dbReference>
<dbReference type="Reactome" id="R-HSA-5617833">
    <property type="pathway name" value="Cilium Assembly"/>
</dbReference>
<dbReference type="Reactome" id="R-HSA-5626467">
    <property type="pathway name" value="RHO GTPases activate IQGAPs"/>
</dbReference>
<dbReference type="Reactome" id="R-HSA-5663220">
    <property type="pathway name" value="RHO GTPases Activate Formins"/>
</dbReference>
<dbReference type="Reactome" id="R-HSA-6807878">
    <property type="pathway name" value="COPI-mediated anterograde transport"/>
</dbReference>
<dbReference type="Reactome" id="R-HSA-6811434">
    <property type="pathway name" value="COPI-dependent Golgi-to-ER retrograde traffic"/>
</dbReference>
<dbReference type="Reactome" id="R-HSA-6811436">
    <property type="pathway name" value="COPI-independent Golgi-to-ER retrograde traffic"/>
</dbReference>
<dbReference type="Reactome" id="R-HSA-68877">
    <property type="pathway name" value="Mitotic Prometaphase"/>
</dbReference>
<dbReference type="Reactome" id="R-HSA-8852276">
    <property type="pathway name" value="The role of GTSE1 in G2/M progression after G2 checkpoint"/>
</dbReference>
<dbReference type="Reactome" id="R-HSA-8955332">
    <property type="pathway name" value="Carboxyterminal post-translational modifications of tubulin"/>
</dbReference>
<dbReference type="Reactome" id="R-HSA-9609690">
    <property type="pathway name" value="HCMV Early Events"/>
</dbReference>
<dbReference type="Reactome" id="R-HSA-9609736">
    <property type="pathway name" value="Assembly and cell surface presentation of NMDA receptors"/>
</dbReference>
<dbReference type="Reactome" id="R-HSA-9619483">
    <property type="pathway name" value="Activation of AMPK downstream of NMDARs"/>
</dbReference>
<dbReference type="Reactome" id="R-HSA-9646399">
    <property type="pathway name" value="Aggrephagy"/>
</dbReference>
<dbReference type="Reactome" id="R-HSA-9648025">
    <property type="pathway name" value="EML4 and NUDC in mitotic spindle formation"/>
</dbReference>
<dbReference type="Reactome" id="R-HSA-9668328">
    <property type="pathway name" value="Sealing of the nuclear envelope (NE) by ESCRT-III"/>
</dbReference>
<dbReference type="Reactome" id="R-HSA-983189">
    <property type="pathway name" value="Kinesins"/>
</dbReference>
<dbReference type="Reactome" id="R-HSA-9833482">
    <property type="pathway name" value="PKR-mediated signaling"/>
</dbReference>
<dbReference type="SignaLink" id="Q3ZCM7"/>
<dbReference type="BioGRID-ORCS" id="347688">
    <property type="hits" value="378 hits in 1067 CRISPR screens"/>
</dbReference>
<dbReference type="CD-CODE" id="91857CE7">
    <property type="entry name" value="Nucleolus"/>
</dbReference>
<dbReference type="CD-CODE" id="DEE660B4">
    <property type="entry name" value="Stress granule"/>
</dbReference>
<dbReference type="GenomeRNAi" id="347688"/>
<dbReference type="Pharos" id="Q3ZCM7">
    <property type="development level" value="Tclin"/>
</dbReference>
<dbReference type="PRO" id="PR:Q3ZCM7"/>
<dbReference type="Proteomes" id="UP000005640">
    <property type="component" value="Chromosome 10"/>
</dbReference>
<dbReference type="RNAct" id="Q3ZCM7">
    <property type="molecule type" value="protein"/>
</dbReference>
<dbReference type="Bgee" id="ENSG00000261456">
    <property type="expression patterns" value="Expressed in primordial germ cell in gonad and 84 other cell types or tissues"/>
</dbReference>
<dbReference type="ExpressionAtlas" id="Q3ZCM7">
    <property type="expression patterns" value="baseline and differential"/>
</dbReference>
<dbReference type="GO" id="GO:0005737">
    <property type="term" value="C:cytoplasm"/>
    <property type="evidence" value="ECO:0000318"/>
    <property type="project" value="GO_Central"/>
</dbReference>
<dbReference type="GO" id="GO:0070062">
    <property type="term" value="C:extracellular exosome"/>
    <property type="evidence" value="ECO:0007005"/>
    <property type="project" value="UniProtKB"/>
</dbReference>
<dbReference type="GO" id="GO:0045171">
    <property type="term" value="C:intercellular bridge"/>
    <property type="evidence" value="ECO:0000314"/>
    <property type="project" value="HPA"/>
</dbReference>
<dbReference type="GO" id="GO:0072687">
    <property type="term" value="C:meiotic spindle"/>
    <property type="evidence" value="ECO:0000314"/>
    <property type="project" value="UniProtKB"/>
</dbReference>
<dbReference type="GO" id="GO:0005874">
    <property type="term" value="C:microtubule"/>
    <property type="evidence" value="ECO:0000318"/>
    <property type="project" value="GO_Central"/>
</dbReference>
<dbReference type="GO" id="GO:0015630">
    <property type="term" value="C:microtubule cytoskeleton"/>
    <property type="evidence" value="ECO:0000314"/>
    <property type="project" value="HPA"/>
</dbReference>
<dbReference type="GO" id="GO:0072686">
    <property type="term" value="C:mitotic spindle"/>
    <property type="evidence" value="ECO:0000314"/>
    <property type="project" value="HPA"/>
</dbReference>
<dbReference type="GO" id="GO:0005525">
    <property type="term" value="F:GTP binding"/>
    <property type="evidence" value="ECO:0000318"/>
    <property type="project" value="GO_Central"/>
</dbReference>
<dbReference type="GO" id="GO:0003924">
    <property type="term" value="F:GTPase activity"/>
    <property type="evidence" value="ECO:0007669"/>
    <property type="project" value="InterPro"/>
</dbReference>
<dbReference type="GO" id="GO:0046872">
    <property type="term" value="F:metal ion binding"/>
    <property type="evidence" value="ECO:0007669"/>
    <property type="project" value="UniProtKB-KW"/>
</dbReference>
<dbReference type="GO" id="GO:0005200">
    <property type="term" value="F:structural constituent of cytoskeleton"/>
    <property type="evidence" value="ECO:0000318"/>
    <property type="project" value="GO_Central"/>
</dbReference>
<dbReference type="GO" id="GO:0000226">
    <property type="term" value="P:microtubule cytoskeleton organization"/>
    <property type="evidence" value="ECO:0000318"/>
    <property type="project" value="GO_Central"/>
</dbReference>
<dbReference type="GO" id="GO:0000278">
    <property type="term" value="P:mitotic cell cycle"/>
    <property type="evidence" value="ECO:0000318"/>
    <property type="project" value="GO_Central"/>
</dbReference>
<dbReference type="GO" id="GO:0001556">
    <property type="term" value="P:oocyte maturation"/>
    <property type="evidence" value="ECO:0000315"/>
    <property type="project" value="UniProtKB"/>
</dbReference>
<dbReference type="GO" id="GO:0007056">
    <property type="term" value="P:spindle assembly involved in female meiosis"/>
    <property type="evidence" value="ECO:0000315"/>
    <property type="project" value="UniProtKB"/>
</dbReference>
<dbReference type="CDD" id="cd02187">
    <property type="entry name" value="beta_tubulin"/>
    <property type="match status" value="1"/>
</dbReference>
<dbReference type="FunFam" id="1.10.287.600:FF:000002">
    <property type="entry name" value="Tubulin beta chain"/>
    <property type="match status" value="1"/>
</dbReference>
<dbReference type="FunFam" id="3.30.1330.20:FF:000002">
    <property type="entry name" value="Tubulin beta chain"/>
    <property type="match status" value="1"/>
</dbReference>
<dbReference type="FunFam" id="3.40.50.1440:FF:000025">
    <property type="entry name" value="Tubulin beta chain"/>
    <property type="match status" value="1"/>
</dbReference>
<dbReference type="FunFam" id="3.40.50.1440:FF:000018">
    <property type="entry name" value="Tubulin beta chain, putative"/>
    <property type="match status" value="1"/>
</dbReference>
<dbReference type="Gene3D" id="1.10.287.600">
    <property type="entry name" value="Helix hairpin bin"/>
    <property type="match status" value="1"/>
</dbReference>
<dbReference type="Gene3D" id="3.30.1330.20">
    <property type="entry name" value="Tubulin/FtsZ, C-terminal domain"/>
    <property type="match status" value="1"/>
</dbReference>
<dbReference type="Gene3D" id="3.40.50.1440">
    <property type="entry name" value="Tubulin/FtsZ, GTPase domain"/>
    <property type="match status" value="1"/>
</dbReference>
<dbReference type="InterPro" id="IPR013838">
    <property type="entry name" value="Beta-tubulin_BS"/>
</dbReference>
<dbReference type="InterPro" id="IPR002453">
    <property type="entry name" value="Beta_tubulin"/>
</dbReference>
<dbReference type="InterPro" id="IPR008280">
    <property type="entry name" value="Tub_FtsZ_C"/>
</dbReference>
<dbReference type="InterPro" id="IPR000217">
    <property type="entry name" value="Tubulin"/>
</dbReference>
<dbReference type="InterPro" id="IPR037103">
    <property type="entry name" value="Tubulin/FtsZ-like_C"/>
</dbReference>
<dbReference type="InterPro" id="IPR018316">
    <property type="entry name" value="Tubulin/FtsZ_2-layer-sand-dom"/>
</dbReference>
<dbReference type="InterPro" id="IPR036525">
    <property type="entry name" value="Tubulin/FtsZ_GTPase_sf"/>
</dbReference>
<dbReference type="InterPro" id="IPR023123">
    <property type="entry name" value="Tubulin_C"/>
</dbReference>
<dbReference type="InterPro" id="IPR017975">
    <property type="entry name" value="Tubulin_CS"/>
</dbReference>
<dbReference type="InterPro" id="IPR003008">
    <property type="entry name" value="Tubulin_FtsZ_GTPase"/>
</dbReference>
<dbReference type="PANTHER" id="PTHR11588">
    <property type="entry name" value="TUBULIN"/>
    <property type="match status" value="1"/>
</dbReference>
<dbReference type="Pfam" id="PF00091">
    <property type="entry name" value="Tubulin"/>
    <property type="match status" value="1"/>
</dbReference>
<dbReference type="Pfam" id="PF03953">
    <property type="entry name" value="Tubulin_C"/>
    <property type="match status" value="1"/>
</dbReference>
<dbReference type="PRINTS" id="PR01163">
    <property type="entry name" value="BETATUBULIN"/>
</dbReference>
<dbReference type="PRINTS" id="PR01161">
    <property type="entry name" value="TUBULIN"/>
</dbReference>
<dbReference type="SMART" id="SM00864">
    <property type="entry name" value="Tubulin"/>
    <property type="match status" value="1"/>
</dbReference>
<dbReference type="SMART" id="SM00865">
    <property type="entry name" value="Tubulin_C"/>
    <property type="match status" value="1"/>
</dbReference>
<dbReference type="SUPFAM" id="SSF55307">
    <property type="entry name" value="Tubulin C-terminal domain-like"/>
    <property type="match status" value="1"/>
</dbReference>
<dbReference type="SUPFAM" id="SSF52490">
    <property type="entry name" value="Tubulin nucleotide-binding domain-like"/>
    <property type="match status" value="1"/>
</dbReference>
<dbReference type="PROSITE" id="PS00227">
    <property type="entry name" value="TUBULIN"/>
    <property type="match status" value="1"/>
</dbReference>
<dbReference type="PROSITE" id="PS00228">
    <property type="entry name" value="TUBULIN_B_AUTOREG"/>
    <property type="match status" value="1"/>
</dbReference>
<comment type="function">
    <text evidence="8 12">Tubulin is the major constituent of microtubules, a cylinder consisting of laterally associated linear protofilaments composed of alpha- and beta-tubulin heterodimers. Microtubules grow by the addition of GTP-tubulin dimers to the microtubule end, where a stabilizing cap forms. Below the cap, tubulin dimers are in GDP-bound state, owing to GTPase activity of alpha-tubulin. TUBB8 has a key role in meiotic spindle assembly and oocyte maturation (PubMed:26789871, PubMed:34509376).</text>
</comment>
<comment type="cofactor">
    <cofactor evidence="2">
        <name>Mg(2+)</name>
        <dbReference type="ChEBI" id="CHEBI:18420"/>
    </cofactor>
</comment>
<comment type="subunit">
    <text>Dimer of alpha and beta chains. A typical microtubule is a hollow water-filled tube with an outer diameter of 25 nm and an inner diameter of 15 nM. Alpha-beta heterodimers associate head-to-tail to form protofilaments running lengthwise along the microtubule wall with the beta-tubulin subunit facing the microtubule plus end conferring a structural polarity. Microtubules usually have 13 protofilaments but different protofilament numbers can be found in some organisms and specialized cells.</text>
</comment>
<comment type="interaction">
    <interactant intactId="EBI-302558">
        <id>Q3ZCM7</id>
    </interactant>
    <interactant intactId="EBI-1785876">
        <id>O75529</id>
        <label>TAF5L</label>
    </interactant>
    <organismsDiffer>false</organismsDiffer>
    <experiments>3</experiments>
</comment>
<comment type="subcellular location">
    <subcellularLocation>
        <location evidence="8">Cytoplasm</location>
        <location evidence="8">Cytoskeleton</location>
    </subcellularLocation>
    <subcellularLocation>
        <location evidence="8">Cytoplasm</location>
        <location evidence="8">Cytoskeleton</location>
        <location evidence="8">Spindle</location>
    </subcellularLocation>
</comment>
<comment type="tissue specificity">
    <text evidence="8">Expressed at a high level in oocytes, at different stages of development.</text>
</comment>
<comment type="domain">
    <text evidence="1">The MREI motif is common among all beta-tubulin isoforms and may be critical for tubulin autoregulation.</text>
</comment>
<comment type="PTM">
    <text evidence="3 9">Some glutamate residues at the C-terminus are polyglutamylated, resulting in polyglutamate chains on the gamma-carboxyl group (PubMed:26875866). Polyglutamylation plays a key role in microtubule severing by spastin (SPAST). SPAST preferentially recognizes and acts on microtubules decorated with short polyglutamate tails: severing activity by SPAST increases as the number of glutamates per tubulin rises from one to eight, but decreases beyond this glutamylation threshold (PubMed:26875866). Glutamylation is also involved in cilia motility (By similarity).</text>
</comment>
<comment type="PTM">
    <text evidence="1 14">Some glutamate residues at the C-terminus are monoglycylated but not polyglycylated due to the absence of functional TTLL10 in human. Monoglycylation is mainly limited to tubulin incorporated into cilia and flagella axonemes, which is required for their stability and maintenance. Flagella glycylation controls sperm motility. Both polyglutamylation and monoglycylation can coexist on the same protein on adjacent residues, and lowering glycylation levels increases polyglutamylation, and reciprocally.</text>
</comment>
<comment type="PTM">
    <text evidence="7">Phosphorylated on Ser-172 by CDK1 during the cell cycle, from metaphase to telophase, but not in interphase. This phosphorylation inhibits tubulin incorporation into microtubules.</text>
</comment>
<comment type="disease" evidence="8 10 11 12">
    <disease id="DI-04613">
        <name>Oocyte/zygote/embryo maturation arrest 2</name>
        <acronym>OZEMA2</acronym>
        <description>A primary infertility disorder caused by defective oocyte maturation. Oocytes are arrested at metaphase I, and have an abnormal or no detectable spindle on polarization microscopy. OOMD2 inheritance can be autosomal dominant or autosomal recessive.</description>
        <dbReference type="MIM" id="616780"/>
    </disease>
    <text>The disease is caused by variants affecting the gene represented in this entry.</text>
</comment>
<comment type="similarity">
    <text evidence="13">Belongs to the tubulin family.</text>
</comment>
<keyword id="KW-0963">Cytoplasm</keyword>
<keyword id="KW-0206">Cytoskeleton</keyword>
<keyword id="KW-0225">Disease variant</keyword>
<keyword id="KW-0342">GTP-binding</keyword>
<keyword id="KW-1017">Isopeptide bond</keyword>
<keyword id="KW-0460">Magnesium</keyword>
<keyword id="KW-0479">Metal-binding</keyword>
<keyword id="KW-0493">Microtubule</keyword>
<keyword id="KW-0547">Nucleotide-binding</keyword>
<keyword id="KW-0597">Phosphoprotein</keyword>
<keyword id="KW-1267">Proteomics identification</keyword>
<keyword id="KW-1185">Reference proteome</keyword>
<organism>
    <name type="scientific">Homo sapiens</name>
    <name type="common">Human</name>
    <dbReference type="NCBI Taxonomy" id="9606"/>
    <lineage>
        <taxon>Eukaryota</taxon>
        <taxon>Metazoa</taxon>
        <taxon>Chordata</taxon>
        <taxon>Craniata</taxon>
        <taxon>Vertebrata</taxon>
        <taxon>Euteleostomi</taxon>
        <taxon>Mammalia</taxon>
        <taxon>Eutheria</taxon>
        <taxon>Euarchontoglires</taxon>
        <taxon>Primates</taxon>
        <taxon>Haplorrhini</taxon>
        <taxon>Catarrhini</taxon>
        <taxon>Hominidae</taxon>
        <taxon>Homo</taxon>
    </lineage>
</organism>